<evidence type="ECO:0000255" key="1"/>
<evidence type="ECO:0000256" key="2">
    <source>
        <dbReference type="SAM" id="MobiDB-lite"/>
    </source>
</evidence>
<evidence type="ECO:0000269" key="3">
    <source>
    </source>
</evidence>
<evidence type="ECO:0000305" key="4"/>
<name>ATXB_LEIDO</name>
<proteinExistence type="evidence at transcript level"/>
<reference key="1">
    <citation type="journal article" date="1989" name="Mol. Biochem. Parasitol.">
        <title>A tandem pair of Leishmania donovani cation transporting ATPase genes encode isoforms that are differentially expressed.</title>
        <authorList>
            <person name="Meade J.C."/>
            <person name="Hudson K.M."/>
            <person name="Stringer S.L."/>
            <person name="Stringer J.R."/>
        </authorList>
    </citation>
    <scope>NUCLEOTIDE SEQUENCE [GENOMIC DNA]</scope>
    <scope>DEVELOPMENTAL STAGE</scope>
    <source>
        <strain>MHOM/ET/67/L82</strain>
    </source>
</reference>
<sequence>MSSKKYELDAAAFEDKPESHSDAEMTPQKPQRRQSVLSKAVSEHDERATGPATDLLPPSKGLTTEEAEELLKKYGRNELPEKKTPSWLIYVRGLWGPMPAALWIAIIIEFALENWPDGAILFAIQIANATIGWYETIKAGDAVAALKNSLKPTATVYRDSKWQQIDAAVLVPGDLVKLASGSAVPADCSINEGVIDVDEAALTGESLPVTMGPEHMPKMGSNVVRGEVEGTVQYTGSLTFFGKTAALLQSVESDLGNIHVILRRVMLALCAISFILCMCCFIYLLARFYETFRHALQFAVVVLVVSIPIALEIVVTTTLAVGSKHLSKHKIIVTKLSAIEMMSGVNMLCSDKTGTLTLNKMEIQEQCFTFEEGNDLKSTLVLAALAAKWREPPRDALDTMVLGAADLDECDNYQQLNFVPFDPTTKRTAATLVDRRSGEKFDVTKGAPHVILQMVYNQDEINDEVVDIIDSLAARGVRCLSVAKTDQQGRWHMAGILTFLDPPRPDTKDTIRRSKEYGVDVKMITGDHLLIAKEMCRMLDLDPNILTADKLPQIKDANDLPEDLGEKYGDMMLSVGGFAQVFPEHKFMIVETLRQRGYTCAMTGDGVNDAPALKRADVGIAVHGATDAARAAADMVLTEPGLSVVVEAMLVSREVFQRMLSFLTYRISATLQLVCFFFIACFSLTPKAYGSVDPNFQFFHLPVLMFMLITLLNDGCLMTIGYDHVIPSERPQKWNLPVVFVSASILAAVACGSSLMLLWIGLEGYSSQYYENSWFHRLGLAQLPQGKLVTMMYLKISISDFLTLFSSRTGGHFFFYVPPSPILFCGAIISLLVSTMAASFWHKSRPDNVLTEGLAWGQTNAEKLLPLWVWIYCIVWWFVQDVVKVLAHICMDAVDLFGCVSDASGSGPIKPYSDDMKVNGFEPVKKPAEKSTEKALNLSVSSGPHKALEGLREDTHVLNESTSPVNAFSPKVKK</sequence>
<dbReference type="EC" id="7.1.2.1"/>
<dbReference type="EMBL" id="AF109296">
    <property type="protein sequence ID" value="AAA29228.1"/>
    <property type="molecule type" value="Genomic_DNA"/>
</dbReference>
<dbReference type="SMR" id="P12522"/>
<dbReference type="VEuPathDB" id="TriTrypDB:LdBPK_181510.1"/>
<dbReference type="VEuPathDB" id="TriTrypDB:LdCL_180020400"/>
<dbReference type="VEuPathDB" id="TriTrypDB:LDHU3_18.1900"/>
<dbReference type="GO" id="GO:0016020">
    <property type="term" value="C:membrane"/>
    <property type="evidence" value="ECO:0007669"/>
    <property type="project" value="UniProtKB-SubCell"/>
</dbReference>
<dbReference type="GO" id="GO:0005524">
    <property type="term" value="F:ATP binding"/>
    <property type="evidence" value="ECO:0007669"/>
    <property type="project" value="UniProtKB-KW"/>
</dbReference>
<dbReference type="GO" id="GO:0016887">
    <property type="term" value="F:ATP hydrolysis activity"/>
    <property type="evidence" value="ECO:0007669"/>
    <property type="project" value="InterPro"/>
</dbReference>
<dbReference type="GO" id="GO:0008553">
    <property type="term" value="F:P-type proton-exporting transporter activity"/>
    <property type="evidence" value="ECO:0007669"/>
    <property type="project" value="UniProtKB-EC"/>
</dbReference>
<dbReference type="GO" id="GO:0120029">
    <property type="term" value="P:proton export across plasma membrane"/>
    <property type="evidence" value="ECO:0007669"/>
    <property type="project" value="InterPro"/>
</dbReference>
<dbReference type="CDD" id="cd02076">
    <property type="entry name" value="P-type_ATPase_H"/>
    <property type="match status" value="1"/>
</dbReference>
<dbReference type="FunFam" id="2.70.150.10:FF:000042">
    <property type="entry name" value="Plasma membrane ATPase"/>
    <property type="match status" value="1"/>
</dbReference>
<dbReference type="FunFam" id="3.40.1110.10:FF:000005">
    <property type="entry name" value="Plasma membrane ATPase"/>
    <property type="match status" value="1"/>
</dbReference>
<dbReference type="FunFam" id="3.40.50.1000:FF:000008">
    <property type="entry name" value="Plasma membrane ATPase"/>
    <property type="match status" value="1"/>
</dbReference>
<dbReference type="Gene3D" id="3.40.1110.10">
    <property type="entry name" value="Calcium-transporting ATPase, cytoplasmic domain N"/>
    <property type="match status" value="1"/>
</dbReference>
<dbReference type="Gene3D" id="2.70.150.10">
    <property type="entry name" value="Calcium-transporting ATPase, cytoplasmic transduction domain A"/>
    <property type="match status" value="1"/>
</dbReference>
<dbReference type="Gene3D" id="1.20.1110.10">
    <property type="entry name" value="Calcium-transporting ATPase, transmembrane domain"/>
    <property type="match status" value="1"/>
</dbReference>
<dbReference type="Gene3D" id="3.40.50.1000">
    <property type="entry name" value="HAD superfamily/HAD-like"/>
    <property type="match status" value="1"/>
</dbReference>
<dbReference type="InterPro" id="IPR004014">
    <property type="entry name" value="ATPase_P-typ_cation-transptr_N"/>
</dbReference>
<dbReference type="InterPro" id="IPR023299">
    <property type="entry name" value="ATPase_P-typ_cyto_dom_N"/>
</dbReference>
<dbReference type="InterPro" id="IPR018303">
    <property type="entry name" value="ATPase_P-typ_P_site"/>
</dbReference>
<dbReference type="InterPro" id="IPR023298">
    <property type="entry name" value="ATPase_P-typ_TM_dom_sf"/>
</dbReference>
<dbReference type="InterPro" id="IPR008250">
    <property type="entry name" value="ATPase_P-typ_transduc_dom_A_sf"/>
</dbReference>
<dbReference type="InterPro" id="IPR036412">
    <property type="entry name" value="HAD-like_sf"/>
</dbReference>
<dbReference type="InterPro" id="IPR023214">
    <property type="entry name" value="HAD_sf"/>
</dbReference>
<dbReference type="InterPro" id="IPR006534">
    <property type="entry name" value="P-type_ATPase_IIIA"/>
</dbReference>
<dbReference type="InterPro" id="IPR001757">
    <property type="entry name" value="P_typ_ATPase"/>
</dbReference>
<dbReference type="InterPro" id="IPR044492">
    <property type="entry name" value="P_typ_ATPase_HD_dom"/>
</dbReference>
<dbReference type="NCBIfam" id="TIGR01647">
    <property type="entry name" value="ATPase-IIIA_H"/>
    <property type="match status" value="1"/>
</dbReference>
<dbReference type="NCBIfam" id="TIGR01494">
    <property type="entry name" value="ATPase_P-type"/>
    <property type="match status" value="2"/>
</dbReference>
<dbReference type="PANTHER" id="PTHR42861">
    <property type="entry name" value="CALCIUM-TRANSPORTING ATPASE"/>
    <property type="match status" value="1"/>
</dbReference>
<dbReference type="Pfam" id="PF00690">
    <property type="entry name" value="Cation_ATPase_N"/>
    <property type="match status" value="1"/>
</dbReference>
<dbReference type="Pfam" id="PF00122">
    <property type="entry name" value="E1-E2_ATPase"/>
    <property type="match status" value="1"/>
</dbReference>
<dbReference type="Pfam" id="PF00702">
    <property type="entry name" value="Hydrolase"/>
    <property type="match status" value="1"/>
</dbReference>
<dbReference type="PRINTS" id="PR00119">
    <property type="entry name" value="CATATPASE"/>
</dbReference>
<dbReference type="PRINTS" id="PR00120">
    <property type="entry name" value="HATPASE"/>
</dbReference>
<dbReference type="SFLD" id="SFLDG00002">
    <property type="entry name" value="C1.7:_P-type_atpase_like"/>
    <property type="match status" value="1"/>
</dbReference>
<dbReference type="SFLD" id="SFLDF00027">
    <property type="entry name" value="p-type_atpase"/>
    <property type="match status" value="1"/>
</dbReference>
<dbReference type="SMART" id="SM00831">
    <property type="entry name" value="Cation_ATPase_N"/>
    <property type="match status" value="1"/>
</dbReference>
<dbReference type="SUPFAM" id="SSF81653">
    <property type="entry name" value="Calcium ATPase, transduction domain A"/>
    <property type="match status" value="1"/>
</dbReference>
<dbReference type="SUPFAM" id="SSF81665">
    <property type="entry name" value="Calcium ATPase, transmembrane domain M"/>
    <property type="match status" value="1"/>
</dbReference>
<dbReference type="SUPFAM" id="SSF56784">
    <property type="entry name" value="HAD-like"/>
    <property type="match status" value="1"/>
</dbReference>
<dbReference type="SUPFAM" id="SSF81660">
    <property type="entry name" value="Metal cation-transporting ATPase, ATP-binding domain N"/>
    <property type="match status" value="1"/>
</dbReference>
<dbReference type="PROSITE" id="PS00154">
    <property type="entry name" value="ATPASE_E1_E2"/>
    <property type="match status" value="1"/>
</dbReference>
<gene>
    <name type="primary">H1B</name>
</gene>
<organism>
    <name type="scientific">Leishmania donovani</name>
    <dbReference type="NCBI Taxonomy" id="5661"/>
    <lineage>
        <taxon>Eukaryota</taxon>
        <taxon>Discoba</taxon>
        <taxon>Euglenozoa</taxon>
        <taxon>Kinetoplastea</taxon>
        <taxon>Metakinetoplastina</taxon>
        <taxon>Trypanosomatida</taxon>
        <taxon>Trypanosomatidae</taxon>
        <taxon>Leishmaniinae</taxon>
        <taxon>Leishmania</taxon>
    </lineage>
</organism>
<feature type="chain" id="PRO_0000046181" description="Probable proton ATPase 1B">
    <location>
        <begin position="1"/>
        <end position="974"/>
    </location>
</feature>
<feature type="transmembrane region" description="Helical" evidence="1">
    <location>
        <begin position="93"/>
        <end position="112"/>
    </location>
</feature>
<feature type="transmembrane region" description="Helical" evidence="1">
    <location>
        <begin position="118"/>
        <end position="137"/>
    </location>
</feature>
<feature type="transmembrane region" description="Helical" evidence="1">
    <location>
        <begin position="265"/>
        <end position="286"/>
    </location>
</feature>
<feature type="transmembrane region" description="Helical" evidence="1">
    <location>
        <begin position="295"/>
        <end position="321"/>
    </location>
</feature>
<feature type="transmembrane region" description="Helical" evidence="1">
    <location>
        <begin position="631"/>
        <end position="651"/>
    </location>
</feature>
<feature type="transmembrane region" description="Helical" evidence="1">
    <location>
        <begin position="662"/>
        <end position="684"/>
    </location>
</feature>
<feature type="transmembrane region" description="Helical" evidence="1">
    <location>
        <begin position="698"/>
        <end position="712"/>
    </location>
</feature>
<feature type="transmembrane region" description="Helical" evidence="1">
    <location>
        <begin position="738"/>
        <end position="761"/>
    </location>
</feature>
<feature type="transmembrane region" description="Helical" evidence="1">
    <location>
        <begin position="813"/>
        <end position="840"/>
    </location>
</feature>
<feature type="transmembrane region" description="Helical" evidence="1">
    <location>
        <begin position="869"/>
        <end position="887"/>
    </location>
</feature>
<feature type="region of interest" description="Disordered" evidence="2">
    <location>
        <begin position="1"/>
        <end position="61"/>
    </location>
</feature>
<feature type="region of interest" description="Disordered" evidence="2">
    <location>
        <begin position="952"/>
        <end position="974"/>
    </location>
</feature>
<feature type="compositionally biased region" description="Basic and acidic residues" evidence="2">
    <location>
        <begin position="1"/>
        <end position="23"/>
    </location>
</feature>
<feature type="active site" description="4-aspartylphosphate intermediate">
    <location>
        <position position="351"/>
    </location>
</feature>
<comment type="catalytic activity">
    <reaction>
        <text>ATP + H2O + H(+)(in) = ADP + phosphate + 2 H(+)(out)</text>
        <dbReference type="Rhea" id="RHEA:20852"/>
        <dbReference type="ChEBI" id="CHEBI:15377"/>
        <dbReference type="ChEBI" id="CHEBI:15378"/>
        <dbReference type="ChEBI" id="CHEBI:30616"/>
        <dbReference type="ChEBI" id="CHEBI:43474"/>
        <dbReference type="ChEBI" id="CHEBI:456216"/>
        <dbReference type="EC" id="7.1.2.1"/>
    </reaction>
</comment>
<comment type="subcellular location">
    <subcellularLocation>
        <location>Membrane</location>
        <topology>Multi-pass membrane protein</topology>
    </subcellularLocation>
</comment>
<comment type="developmental stage">
    <text evidence="3">More abundant in amastigotes than promastigotes.</text>
</comment>
<comment type="similarity">
    <text evidence="4">Belongs to the cation transport ATPase (P-type) (TC 3.A.3) family. Type IIIA subfamily.</text>
</comment>
<keyword id="KW-0067">ATP-binding</keyword>
<keyword id="KW-0375">Hydrogen ion transport</keyword>
<keyword id="KW-0406">Ion transport</keyword>
<keyword id="KW-0460">Magnesium</keyword>
<keyword id="KW-0472">Membrane</keyword>
<keyword id="KW-0547">Nucleotide-binding</keyword>
<keyword id="KW-0597">Phosphoprotein</keyword>
<keyword id="KW-1278">Translocase</keyword>
<keyword id="KW-0812">Transmembrane</keyword>
<keyword id="KW-1133">Transmembrane helix</keyword>
<keyword id="KW-0813">Transport</keyword>
<protein>
    <recommendedName>
        <fullName>Probable proton ATPase 1B</fullName>
        <ecNumber>7.1.2.1</ecNumber>
    </recommendedName>
    <alternativeName>
        <fullName>LdH1B</fullName>
    </alternativeName>
</protein>
<accession>P12522</accession>